<evidence type="ECO:0000250" key="1"/>
<evidence type="ECO:0000305" key="2"/>
<proteinExistence type="inferred from homology"/>
<protein>
    <recommendedName>
        <fullName>ASTRA-associated protein 1</fullName>
    </recommendedName>
</protein>
<gene>
    <name type="primary">ASA1</name>
    <name type="ORF">CAWG_05058</name>
</gene>
<name>ASA1_CANAW</name>
<accession>C4YSJ2</accession>
<reference key="1">
    <citation type="journal article" date="2009" name="Nature">
        <title>Evolution of pathogenicity and sexual reproduction in eight Candida genomes.</title>
        <authorList>
            <person name="Butler G."/>
            <person name="Rasmussen M.D."/>
            <person name="Lin M.F."/>
            <person name="Santos M.A.S."/>
            <person name="Sakthikumar S."/>
            <person name="Munro C.A."/>
            <person name="Rheinbay E."/>
            <person name="Grabherr M."/>
            <person name="Forche A."/>
            <person name="Reedy J.L."/>
            <person name="Agrafioti I."/>
            <person name="Arnaud M.B."/>
            <person name="Bates S."/>
            <person name="Brown A.J.P."/>
            <person name="Brunke S."/>
            <person name="Costanzo M.C."/>
            <person name="Fitzpatrick D.A."/>
            <person name="de Groot P.W.J."/>
            <person name="Harris D."/>
            <person name="Hoyer L.L."/>
            <person name="Hube B."/>
            <person name="Klis F.M."/>
            <person name="Kodira C."/>
            <person name="Lennard N."/>
            <person name="Logue M.E."/>
            <person name="Martin R."/>
            <person name="Neiman A.M."/>
            <person name="Nikolaou E."/>
            <person name="Quail M.A."/>
            <person name="Quinn J."/>
            <person name="Santos M.C."/>
            <person name="Schmitzberger F.F."/>
            <person name="Sherlock G."/>
            <person name="Shah P."/>
            <person name="Silverstein K.A.T."/>
            <person name="Skrzypek M.S."/>
            <person name="Soll D."/>
            <person name="Staggs R."/>
            <person name="Stansfield I."/>
            <person name="Stumpf M.P.H."/>
            <person name="Sudbery P.E."/>
            <person name="Srikantha T."/>
            <person name="Zeng Q."/>
            <person name="Berman J."/>
            <person name="Berriman M."/>
            <person name="Heitman J."/>
            <person name="Gow N.A.R."/>
            <person name="Lorenz M.C."/>
            <person name="Birren B.W."/>
            <person name="Kellis M."/>
            <person name="Cuomo C.A."/>
        </authorList>
    </citation>
    <scope>NUCLEOTIDE SEQUENCE [LARGE SCALE GENOMIC DNA]</scope>
    <source>
        <strain>WO-1</strain>
    </source>
</reference>
<dbReference type="EMBL" id="CM000312">
    <property type="protein sequence ID" value="EEQ46695.1"/>
    <property type="molecule type" value="Genomic_DNA"/>
</dbReference>
<dbReference type="SMR" id="C4YSJ2"/>
<dbReference type="PaxDb" id="5476-C4YSJ2"/>
<dbReference type="VEuPathDB" id="FungiDB:CAWG_05058"/>
<dbReference type="HOGENOM" id="CLU_045414_0_0_1"/>
<dbReference type="OMA" id="LVCCNTQ"/>
<dbReference type="OrthoDB" id="25612at766764"/>
<dbReference type="Proteomes" id="UP000001429">
    <property type="component" value="Chromosome 6"/>
</dbReference>
<dbReference type="GO" id="GO:0005634">
    <property type="term" value="C:nucleus"/>
    <property type="evidence" value="ECO:0007669"/>
    <property type="project" value="UniProtKB-SubCell"/>
</dbReference>
<dbReference type="GO" id="GO:0006325">
    <property type="term" value="P:chromatin organization"/>
    <property type="evidence" value="ECO:0007669"/>
    <property type="project" value="UniProtKB-KW"/>
</dbReference>
<dbReference type="Gene3D" id="2.130.10.10">
    <property type="entry name" value="YVTN repeat-like/Quinoprotein amine dehydrogenase"/>
    <property type="match status" value="1"/>
</dbReference>
<dbReference type="InterPro" id="IPR015943">
    <property type="entry name" value="WD40/YVTN_repeat-like_dom_sf"/>
</dbReference>
<dbReference type="InterPro" id="IPR036322">
    <property type="entry name" value="WD40_repeat_dom_sf"/>
</dbReference>
<dbReference type="InterPro" id="IPR001680">
    <property type="entry name" value="WD40_rpt"/>
</dbReference>
<dbReference type="Pfam" id="PF00400">
    <property type="entry name" value="WD40"/>
    <property type="match status" value="1"/>
</dbReference>
<dbReference type="SMART" id="SM00320">
    <property type="entry name" value="WD40"/>
    <property type="match status" value="3"/>
</dbReference>
<dbReference type="SUPFAM" id="SSF50978">
    <property type="entry name" value="WD40 repeat-like"/>
    <property type="match status" value="1"/>
</dbReference>
<dbReference type="PROSITE" id="PS50082">
    <property type="entry name" value="WD_REPEATS_2"/>
    <property type="match status" value="1"/>
</dbReference>
<dbReference type="PROSITE" id="PS50294">
    <property type="entry name" value="WD_REPEATS_REGION"/>
    <property type="match status" value="1"/>
</dbReference>
<sequence length="377" mass="42551">MLSTKFTLRSHKSSVTYIYQDPRTPFNLFTADSSGLIINWDLTIRRPKKSWQAHTDTILTISTIHNHLLTHSRDNTIKIWDESYSCILEIPCNALNFSNICVINDLLITPASINSNNLDVYKIDKDWQITRLIFDFDVYKLVNKGEIIEEIGSSGTSRNDFGIIMQMKIIHTNTTTTTSENNSDYIIYVGFESGDIVGLQLILPRARILSTTGNTNDKTLINQSAKFILQYHNSTHVPNPVICLSNLDSVLVSGSTTNKVIIHSDPIEIMKMDHSGIQAIVNFKNDRLIFGYWNGYIQYGDISINQSLPKLGNTEQEKSKLTKKLTFMTILNESNQETLQSPTGKSKYSVLLKSKRNLVSPLLLAGYEDGSILAYNI</sequence>
<comment type="function">
    <text evidence="1">Component of the ASTRA complex involved in chromatin remodeling.</text>
</comment>
<comment type="subunit">
    <text evidence="1">Component of the ASTRA chromatin remodeling machinery complex.</text>
</comment>
<comment type="subcellular location">
    <subcellularLocation>
        <location evidence="1">Nucleus</location>
    </subcellularLocation>
</comment>
<comment type="similarity">
    <text evidence="2">Belongs to the WD repeat ASA1 family.</text>
</comment>
<organism>
    <name type="scientific">Candida albicans (strain WO-1)</name>
    <name type="common">Yeast</name>
    <dbReference type="NCBI Taxonomy" id="294748"/>
    <lineage>
        <taxon>Eukaryota</taxon>
        <taxon>Fungi</taxon>
        <taxon>Dikarya</taxon>
        <taxon>Ascomycota</taxon>
        <taxon>Saccharomycotina</taxon>
        <taxon>Pichiomycetes</taxon>
        <taxon>Debaryomycetaceae</taxon>
        <taxon>Candida/Lodderomyces clade</taxon>
        <taxon>Candida</taxon>
    </lineage>
</organism>
<feature type="chain" id="PRO_0000402205" description="ASTRA-associated protein 1">
    <location>
        <begin position="1"/>
        <end position="377"/>
    </location>
</feature>
<feature type="repeat" description="WD 1">
    <location>
        <begin position="10"/>
        <end position="50"/>
    </location>
</feature>
<feature type="repeat" description="WD 2">
    <location>
        <begin position="53"/>
        <end position="91"/>
    </location>
</feature>
<feature type="repeat" description="WD 3">
    <location>
        <begin position="230"/>
        <end position="262"/>
    </location>
</feature>
<feature type="repeat" description="WD 4">
    <location>
        <begin position="263"/>
        <end position="303"/>
    </location>
</feature>
<feature type="repeat" description="WD 5">
    <location>
        <begin position="342"/>
        <end position="377"/>
    </location>
</feature>
<keyword id="KW-0156">Chromatin regulator</keyword>
<keyword id="KW-0539">Nucleus</keyword>
<keyword id="KW-0677">Repeat</keyword>
<keyword id="KW-0853">WD repeat</keyword>